<feature type="chain" id="PRO_0000198754" description="Myosin regulatory light chain">
    <location>
        <begin position="1"/>
        <end position="153"/>
    </location>
</feature>
<feature type="domain" description="EF-hand 1" evidence="1">
    <location>
        <begin position="15"/>
        <end position="50"/>
    </location>
</feature>
<feature type="domain" description="EF-hand 2" evidence="1">
    <location>
        <begin position="81"/>
        <end position="116"/>
    </location>
</feature>
<feature type="binding site" evidence="1">
    <location>
        <position position="28"/>
    </location>
    <ligand>
        <name>Ca(2+)</name>
        <dbReference type="ChEBI" id="CHEBI:29108"/>
    </ligand>
</feature>
<feature type="binding site" evidence="1">
    <location>
        <position position="30"/>
    </location>
    <ligand>
        <name>Ca(2+)</name>
        <dbReference type="ChEBI" id="CHEBI:29108"/>
    </ligand>
</feature>
<feature type="binding site" evidence="1">
    <location>
        <position position="32"/>
    </location>
    <ligand>
        <name>Ca(2+)</name>
        <dbReference type="ChEBI" id="CHEBI:29108"/>
    </ligand>
</feature>
<feature type="binding site" evidence="1">
    <location>
        <position position="39"/>
    </location>
    <ligand>
        <name>Ca(2+)</name>
        <dbReference type="ChEBI" id="CHEBI:29108"/>
    </ligand>
</feature>
<feature type="modified residue" description="Blocked amino end (Ala)">
    <location>
        <position position="1"/>
    </location>
</feature>
<dbReference type="PIR" id="A03046">
    <property type="entry name" value="MOSWLE"/>
</dbReference>
<dbReference type="SMR" id="P02613"/>
<dbReference type="GO" id="GO:0016459">
    <property type="term" value="C:myosin complex"/>
    <property type="evidence" value="ECO:0007669"/>
    <property type="project" value="UniProtKB-KW"/>
</dbReference>
<dbReference type="GO" id="GO:0005509">
    <property type="term" value="F:calcium ion binding"/>
    <property type="evidence" value="ECO:0007669"/>
    <property type="project" value="InterPro"/>
</dbReference>
<dbReference type="FunFam" id="1.10.238.10:FF:000007">
    <property type="entry name" value="Putative myosin regulatory light chain sqh"/>
    <property type="match status" value="1"/>
</dbReference>
<dbReference type="Gene3D" id="1.10.238.10">
    <property type="entry name" value="EF-hand"/>
    <property type="match status" value="2"/>
</dbReference>
<dbReference type="InterPro" id="IPR011992">
    <property type="entry name" value="EF-hand-dom_pair"/>
</dbReference>
<dbReference type="InterPro" id="IPR018247">
    <property type="entry name" value="EF_Hand_1_Ca_BS"/>
</dbReference>
<dbReference type="InterPro" id="IPR002048">
    <property type="entry name" value="EF_hand_dom"/>
</dbReference>
<dbReference type="InterPro" id="IPR050403">
    <property type="entry name" value="Myosin_RLC"/>
</dbReference>
<dbReference type="PANTHER" id="PTHR23049">
    <property type="entry name" value="MYOSIN REGULATORY LIGHT CHAIN 2"/>
    <property type="match status" value="1"/>
</dbReference>
<dbReference type="Pfam" id="PF13499">
    <property type="entry name" value="EF-hand_7"/>
    <property type="match status" value="1"/>
</dbReference>
<dbReference type="SMART" id="SM00054">
    <property type="entry name" value="EFh"/>
    <property type="match status" value="2"/>
</dbReference>
<dbReference type="SUPFAM" id="SSF47473">
    <property type="entry name" value="EF-hand"/>
    <property type="match status" value="1"/>
</dbReference>
<dbReference type="PROSITE" id="PS00018">
    <property type="entry name" value="EF_HAND_1"/>
    <property type="match status" value="1"/>
</dbReference>
<dbReference type="PROSITE" id="PS50222">
    <property type="entry name" value="EF_HAND_2"/>
    <property type="match status" value="2"/>
</dbReference>
<evidence type="ECO:0000255" key="1">
    <source>
        <dbReference type="PROSITE-ProRule" id="PRU00448"/>
    </source>
</evidence>
<keyword id="KW-0106">Calcium</keyword>
<keyword id="KW-0903">Direct protein sequencing</keyword>
<keyword id="KW-0479">Metal-binding</keyword>
<keyword id="KW-0505">Motor protein</keyword>
<keyword id="KW-0514">Muscle protein</keyword>
<keyword id="KW-0518">Myosin</keyword>
<keyword id="KW-0677">Repeat</keyword>
<comment type="function">
    <text>In molluscan muscle, calcium regulation is associated with myosin rather than with actin. Muscle myosin contains two types of light chains: the catalytic light chain, essential for ATPase activity, and the regulatory light chain, a calcium-binding protein responsible for Ca(2+) dependent binding and Ca(2+) dependent Mg-ATPase activity.</text>
</comment>
<protein>
    <recommendedName>
        <fullName>Myosin regulatory light chain</fullName>
    </recommendedName>
    <alternativeName>
        <fullName>EDTA light chain</fullName>
    </alternativeName>
</protein>
<proteinExistence type="evidence at protein level"/>
<accession>P02613</accession>
<organism>
    <name type="scientific">Patinopecten sp.</name>
    <name type="common">Scallop</name>
    <dbReference type="NCBI Taxonomy" id="6574"/>
    <lineage>
        <taxon>Eukaryota</taxon>
        <taxon>Metazoa</taxon>
        <taxon>Spiralia</taxon>
        <taxon>Lophotrochozoa</taxon>
        <taxon>Mollusca</taxon>
        <taxon>Bivalvia</taxon>
        <taxon>Autobranchia</taxon>
        <taxon>Pteriomorphia</taxon>
        <taxon>Pectinida</taxon>
        <taxon>Pectinoidea</taxon>
        <taxon>Pectinidae</taxon>
        <taxon>Patinopecten</taxon>
    </lineage>
</organism>
<name>MLR_PATSP</name>
<reference key="1">
    <citation type="book" date="1977" name="Myocardial failure (International Boehringer Mannheim Symposium)">
        <editorList>
            <person name="Riecker G."/>
            <person name="Weber A."/>
            <person name="Goodwin J."/>
        </editorList>
        <authorList>
            <person name="Kendrick-Jones J."/>
            <person name="Jakes R."/>
        </authorList>
    </citation>
    <scope>PROTEIN SEQUENCE</scope>
</reference>
<sequence>ADKAASGVLTKLPQKQIQEMKEAFSMIDVDRDGFVSKDDIKAISEQLGRTPDDKELTAMLKEAPGPLNFTMFLSDKLSGTDSEETIRNAFAMFDEQENKKLNIEYIKDLLEDMGNNFNKDEMRMTFKEAPVEGGKFDYVKFTAMIKGSGEDEA</sequence>